<name>RRF_CLONN</name>
<organism>
    <name type="scientific">Clostridium novyi (strain NT)</name>
    <dbReference type="NCBI Taxonomy" id="386415"/>
    <lineage>
        <taxon>Bacteria</taxon>
        <taxon>Bacillati</taxon>
        <taxon>Bacillota</taxon>
        <taxon>Clostridia</taxon>
        <taxon>Eubacteriales</taxon>
        <taxon>Clostridiaceae</taxon>
        <taxon>Clostridium</taxon>
    </lineage>
</organism>
<sequence>MIKDILNKSEEKMLKSISVLKKDLGSMKAGKANPAMLDRVNVEYYGSETPINQLANVSSPEPRVLLIQPWDKNSLKDIEKAILQSDLGLNPSNDGSVIRLIIPELTEETRKDIVKKVKKIGEESKIAIRSIRREGNDKIKNLKKNNDITEDEAKEGESSVQKITDKYITEIDNIVSAKEKEVMSV</sequence>
<keyword id="KW-0963">Cytoplasm</keyword>
<keyword id="KW-0648">Protein biosynthesis</keyword>
<keyword id="KW-1185">Reference proteome</keyword>
<reference key="1">
    <citation type="journal article" date="2006" name="Nat. Biotechnol.">
        <title>The genome and transcriptomes of the anti-tumor agent Clostridium novyi-NT.</title>
        <authorList>
            <person name="Bettegowda C."/>
            <person name="Huang X."/>
            <person name="Lin J."/>
            <person name="Cheong I."/>
            <person name="Kohli M."/>
            <person name="Szabo S.A."/>
            <person name="Zhang X."/>
            <person name="Diaz L.A. Jr."/>
            <person name="Velculescu V.E."/>
            <person name="Parmigiani G."/>
            <person name="Kinzler K.W."/>
            <person name="Vogelstein B."/>
            <person name="Zhou S."/>
        </authorList>
    </citation>
    <scope>NUCLEOTIDE SEQUENCE [LARGE SCALE GENOMIC DNA]</scope>
    <source>
        <strain>NT</strain>
    </source>
</reference>
<comment type="function">
    <text evidence="1">Responsible for the release of ribosomes from messenger RNA at the termination of protein biosynthesis. May increase the efficiency of translation by recycling ribosomes from one round of translation to another.</text>
</comment>
<comment type="subcellular location">
    <subcellularLocation>
        <location evidence="1">Cytoplasm</location>
    </subcellularLocation>
</comment>
<comment type="similarity">
    <text evidence="1">Belongs to the RRF family.</text>
</comment>
<feature type="chain" id="PRO_1000003144" description="Ribosome-recycling factor">
    <location>
        <begin position="1"/>
        <end position="185"/>
    </location>
</feature>
<dbReference type="EMBL" id="CP000382">
    <property type="protein sequence ID" value="ABK60857.1"/>
    <property type="molecule type" value="Genomic_DNA"/>
</dbReference>
<dbReference type="RefSeq" id="WP_011722219.1">
    <property type="nucleotide sequence ID" value="NC_008593.1"/>
</dbReference>
<dbReference type="SMR" id="A0Q0R7"/>
<dbReference type="STRING" id="386415.NT01CX_2146"/>
<dbReference type="KEGG" id="cno:NT01CX_2146"/>
<dbReference type="eggNOG" id="COG0233">
    <property type="taxonomic scope" value="Bacteria"/>
</dbReference>
<dbReference type="HOGENOM" id="CLU_073981_2_0_9"/>
<dbReference type="Proteomes" id="UP000008220">
    <property type="component" value="Chromosome"/>
</dbReference>
<dbReference type="GO" id="GO:0005737">
    <property type="term" value="C:cytoplasm"/>
    <property type="evidence" value="ECO:0007669"/>
    <property type="project" value="UniProtKB-SubCell"/>
</dbReference>
<dbReference type="GO" id="GO:0043023">
    <property type="term" value="F:ribosomal large subunit binding"/>
    <property type="evidence" value="ECO:0007669"/>
    <property type="project" value="TreeGrafter"/>
</dbReference>
<dbReference type="GO" id="GO:0006415">
    <property type="term" value="P:translational termination"/>
    <property type="evidence" value="ECO:0007669"/>
    <property type="project" value="UniProtKB-UniRule"/>
</dbReference>
<dbReference type="CDD" id="cd00520">
    <property type="entry name" value="RRF"/>
    <property type="match status" value="1"/>
</dbReference>
<dbReference type="FunFam" id="1.10.132.20:FF:000001">
    <property type="entry name" value="Ribosome-recycling factor"/>
    <property type="match status" value="1"/>
</dbReference>
<dbReference type="FunFam" id="3.30.1360.40:FF:000001">
    <property type="entry name" value="Ribosome-recycling factor"/>
    <property type="match status" value="1"/>
</dbReference>
<dbReference type="Gene3D" id="3.30.1360.40">
    <property type="match status" value="1"/>
</dbReference>
<dbReference type="Gene3D" id="1.10.132.20">
    <property type="entry name" value="Ribosome-recycling factor"/>
    <property type="match status" value="1"/>
</dbReference>
<dbReference type="HAMAP" id="MF_00040">
    <property type="entry name" value="RRF"/>
    <property type="match status" value="1"/>
</dbReference>
<dbReference type="InterPro" id="IPR002661">
    <property type="entry name" value="Ribosome_recyc_fac"/>
</dbReference>
<dbReference type="InterPro" id="IPR023584">
    <property type="entry name" value="Ribosome_recyc_fac_dom"/>
</dbReference>
<dbReference type="InterPro" id="IPR036191">
    <property type="entry name" value="RRF_sf"/>
</dbReference>
<dbReference type="NCBIfam" id="TIGR00496">
    <property type="entry name" value="frr"/>
    <property type="match status" value="1"/>
</dbReference>
<dbReference type="PANTHER" id="PTHR20982:SF3">
    <property type="entry name" value="MITOCHONDRIAL RIBOSOME RECYCLING FACTOR PSEUDO 1"/>
    <property type="match status" value="1"/>
</dbReference>
<dbReference type="PANTHER" id="PTHR20982">
    <property type="entry name" value="RIBOSOME RECYCLING FACTOR"/>
    <property type="match status" value="1"/>
</dbReference>
<dbReference type="Pfam" id="PF01765">
    <property type="entry name" value="RRF"/>
    <property type="match status" value="1"/>
</dbReference>
<dbReference type="SUPFAM" id="SSF55194">
    <property type="entry name" value="Ribosome recycling factor, RRF"/>
    <property type="match status" value="1"/>
</dbReference>
<gene>
    <name evidence="1" type="primary">frr</name>
    <name type="ordered locus">NT01CX_2146</name>
</gene>
<accession>A0Q0R7</accession>
<protein>
    <recommendedName>
        <fullName evidence="1">Ribosome-recycling factor</fullName>
        <shortName evidence="1">RRF</shortName>
    </recommendedName>
    <alternativeName>
        <fullName evidence="1">Ribosome-releasing factor</fullName>
    </alternativeName>
</protein>
<evidence type="ECO:0000255" key="1">
    <source>
        <dbReference type="HAMAP-Rule" id="MF_00040"/>
    </source>
</evidence>
<proteinExistence type="inferred from homology"/>